<reference key="1">
    <citation type="journal article" date="2005" name="Proc. Natl. Acad. Sci. U.S.A.">
        <title>The psychrophilic lifestyle as revealed by the genome sequence of Colwellia psychrerythraea 34H through genomic and proteomic analyses.</title>
        <authorList>
            <person name="Methe B.A."/>
            <person name="Nelson K.E."/>
            <person name="Deming J.W."/>
            <person name="Momen B."/>
            <person name="Melamud E."/>
            <person name="Zhang X."/>
            <person name="Moult J."/>
            <person name="Madupu R."/>
            <person name="Nelson W.C."/>
            <person name="Dodson R.J."/>
            <person name="Brinkac L.M."/>
            <person name="Daugherty S.C."/>
            <person name="Durkin A.S."/>
            <person name="DeBoy R.T."/>
            <person name="Kolonay J.F."/>
            <person name="Sullivan S.A."/>
            <person name="Zhou L."/>
            <person name="Davidsen T.M."/>
            <person name="Wu M."/>
            <person name="Huston A.L."/>
            <person name="Lewis M."/>
            <person name="Weaver B."/>
            <person name="Weidman J.F."/>
            <person name="Khouri H."/>
            <person name="Utterback T.R."/>
            <person name="Feldblyum T.V."/>
            <person name="Fraser C.M."/>
        </authorList>
    </citation>
    <scope>NUCLEOTIDE SEQUENCE [LARGE SCALE GENOMIC DNA]</scope>
    <source>
        <strain>34H / ATCC BAA-681</strain>
    </source>
</reference>
<dbReference type="EMBL" id="CP000083">
    <property type="protein sequence ID" value="AAZ25751.1"/>
    <property type="molecule type" value="Genomic_DNA"/>
</dbReference>
<dbReference type="RefSeq" id="WP_011042320.1">
    <property type="nucleotide sequence ID" value="NC_003910.7"/>
</dbReference>
<dbReference type="SMR" id="Q485N9"/>
<dbReference type="STRING" id="167879.CPS_1484"/>
<dbReference type="KEGG" id="cps:CPS_1484"/>
<dbReference type="eggNOG" id="COG1706">
    <property type="taxonomic scope" value="Bacteria"/>
</dbReference>
<dbReference type="HOGENOM" id="CLU_045235_1_0_6"/>
<dbReference type="Proteomes" id="UP000000547">
    <property type="component" value="Chromosome"/>
</dbReference>
<dbReference type="GO" id="GO:0009428">
    <property type="term" value="C:bacterial-type flagellum basal body, distal rod, P ring"/>
    <property type="evidence" value="ECO:0007669"/>
    <property type="project" value="InterPro"/>
</dbReference>
<dbReference type="GO" id="GO:0030288">
    <property type="term" value="C:outer membrane-bounded periplasmic space"/>
    <property type="evidence" value="ECO:0007669"/>
    <property type="project" value="InterPro"/>
</dbReference>
<dbReference type="GO" id="GO:0005198">
    <property type="term" value="F:structural molecule activity"/>
    <property type="evidence" value="ECO:0007669"/>
    <property type="project" value="InterPro"/>
</dbReference>
<dbReference type="GO" id="GO:0071973">
    <property type="term" value="P:bacterial-type flagellum-dependent cell motility"/>
    <property type="evidence" value="ECO:0007669"/>
    <property type="project" value="InterPro"/>
</dbReference>
<dbReference type="HAMAP" id="MF_00416">
    <property type="entry name" value="FlgI"/>
    <property type="match status" value="1"/>
</dbReference>
<dbReference type="InterPro" id="IPR001782">
    <property type="entry name" value="Flag_FlgI"/>
</dbReference>
<dbReference type="NCBIfam" id="NF003676">
    <property type="entry name" value="PRK05303.1"/>
    <property type="match status" value="1"/>
</dbReference>
<dbReference type="PANTHER" id="PTHR30381">
    <property type="entry name" value="FLAGELLAR P-RING PERIPLASMIC PROTEIN FLGI"/>
    <property type="match status" value="1"/>
</dbReference>
<dbReference type="PANTHER" id="PTHR30381:SF0">
    <property type="entry name" value="FLAGELLAR P-RING PROTEIN"/>
    <property type="match status" value="1"/>
</dbReference>
<dbReference type="Pfam" id="PF02119">
    <property type="entry name" value="FlgI"/>
    <property type="match status" value="1"/>
</dbReference>
<dbReference type="PRINTS" id="PR01010">
    <property type="entry name" value="FLGPRINGFLGI"/>
</dbReference>
<evidence type="ECO:0000255" key="1">
    <source>
        <dbReference type="HAMAP-Rule" id="MF_00416"/>
    </source>
</evidence>
<protein>
    <recommendedName>
        <fullName evidence="1">Flagellar P-ring protein</fullName>
    </recommendedName>
    <alternativeName>
        <fullName evidence="1">Basal body P-ring protein</fullName>
    </alternativeName>
</protein>
<proteinExistence type="inferred from homology"/>
<feature type="signal peptide" evidence="1">
    <location>
        <begin position="1"/>
        <end position="21"/>
    </location>
</feature>
<feature type="chain" id="PRO_0000236298" description="Flagellar P-ring protein">
    <location>
        <begin position="22"/>
        <end position="363"/>
    </location>
</feature>
<comment type="function">
    <text evidence="1">Assembles around the rod to form the L-ring and probably protects the motor/basal body from shearing forces during rotation.</text>
</comment>
<comment type="subunit">
    <text evidence="1">The basal body constitutes a major portion of the flagellar organelle and consists of four rings (L,P,S, and M) mounted on a central rod.</text>
</comment>
<comment type="subcellular location">
    <subcellularLocation>
        <location evidence="1">Periplasm</location>
    </subcellularLocation>
    <subcellularLocation>
        <location evidence="1">Bacterial flagellum basal body</location>
    </subcellularLocation>
</comment>
<comment type="similarity">
    <text evidence="1">Belongs to the FlgI family.</text>
</comment>
<accession>Q485N9</accession>
<organism>
    <name type="scientific">Colwellia psychrerythraea (strain 34H / ATCC BAA-681)</name>
    <name type="common">Vibrio psychroerythus</name>
    <dbReference type="NCBI Taxonomy" id="167879"/>
    <lineage>
        <taxon>Bacteria</taxon>
        <taxon>Pseudomonadati</taxon>
        <taxon>Pseudomonadota</taxon>
        <taxon>Gammaproteobacteria</taxon>
        <taxon>Alteromonadales</taxon>
        <taxon>Colwelliaceae</taxon>
        <taxon>Colwellia</taxon>
    </lineage>
</organism>
<gene>
    <name evidence="1" type="primary">flgI</name>
    <name type="ordered locus">CPS_1484</name>
</gene>
<sequence length="363" mass="38001">MKTVINIFILFTFLASLSANAQRIKDLADVAGVRSNQLIGYGLVVGLPGTGEQSPFTEQSFKTMLSNFGITMPDKLKPKIKNVAAVAVHAELSAFTKPGQTIDVTVSSMGSAQSLRGGTLIQTILMGIDGNAYAVAQGSLIVSGLGAQGLDGSQVLVNIPTVGRIANGGIVEREVKSPFSSGDHITFNLRHSDFTTAKLLSDTINDLIEGSAKALDATSVRVRAPRDISDRVSFLSVLENLEFEPASPAAKIIVNSRTGTIVIGSEVTLLAAAITHGGITVTINEIQDVSQPNAFAEGETVVTNQSDINVSNSDARMFVFKPGVTLETLVRAINEVGAGPGDVMAILEALDQAGAIRGELVII</sequence>
<name>FLGI_COLP3</name>
<keyword id="KW-0975">Bacterial flagellum</keyword>
<keyword id="KW-0574">Periplasm</keyword>
<keyword id="KW-0732">Signal</keyword>